<dbReference type="EMBL" id="CP001600">
    <property type="protein sequence ID" value="ACR69064.1"/>
    <property type="molecule type" value="Genomic_DNA"/>
</dbReference>
<dbReference type="RefSeq" id="WP_005293643.1">
    <property type="nucleotide sequence ID" value="NZ_CP169062.1"/>
</dbReference>
<dbReference type="SMR" id="C5B848"/>
<dbReference type="STRING" id="67780.B6E78_02470"/>
<dbReference type="GeneID" id="93124029"/>
<dbReference type="KEGG" id="eic:NT01EI_1888"/>
<dbReference type="HOGENOM" id="CLU_169643_1_1_6"/>
<dbReference type="OrthoDB" id="47476at2"/>
<dbReference type="Proteomes" id="UP000001485">
    <property type="component" value="Chromosome"/>
</dbReference>
<dbReference type="GO" id="GO:0022625">
    <property type="term" value="C:cytosolic large ribosomal subunit"/>
    <property type="evidence" value="ECO:0007669"/>
    <property type="project" value="TreeGrafter"/>
</dbReference>
<dbReference type="GO" id="GO:0003735">
    <property type="term" value="F:structural constituent of ribosome"/>
    <property type="evidence" value="ECO:0007669"/>
    <property type="project" value="InterPro"/>
</dbReference>
<dbReference type="GO" id="GO:0006412">
    <property type="term" value="P:translation"/>
    <property type="evidence" value="ECO:0007669"/>
    <property type="project" value="UniProtKB-UniRule"/>
</dbReference>
<dbReference type="FunFam" id="4.10.410.60:FF:000001">
    <property type="entry name" value="50S ribosomal protein L35"/>
    <property type="match status" value="1"/>
</dbReference>
<dbReference type="Gene3D" id="4.10.410.60">
    <property type="match status" value="1"/>
</dbReference>
<dbReference type="HAMAP" id="MF_00514">
    <property type="entry name" value="Ribosomal_bL35"/>
    <property type="match status" value="1"/>
</dbReference>
<dbReference type="InterPro" id="IPR001706">
    <property type="entry name" value="Ribosomal_bL35"/>
</dbReference>
<dbReference type="InterPro" id="IPR021137">
    <property type="entry name" value="Ribosomal_bL35-like"/>
</dbReference>
<dbReference type="InterPro" id="IPR018265">
    <property type="entry name" value="Ribosomal_bL35_CS"/>
</dbReference>
<dbReference type="InterPro" id="IPR037229">
    <property type="entry name" value="Ribosomal_bL35_sf"/>
</dbReference>
<dbReference type="NCBIfam" id="TIGR00001">
    <property type="entry name" value="rpmI_bact"/>
    <property type="match status" value="1"/>
</dbReference>
<dbReference type="PANTHER" id="PTHR33343">
    <property type="entry name" value="54S RIBOSOMAL PROTEIN BL35M"/>
    <property type="match status" value="1"/>
</dbReference>
<dbReference type="PANTHER" id="PTHR33343:SF1">
    <property type="entry name" value="LARGE RIBOSOMAL SUBUNIT PROTEIN BL35M"/>
    <property type="match status" value="1"/>
</dbReference>
<dbReference type="Pfam" id="PF01632">
    <property type="entry name" value="Ribosomal_L35p"/>
    <property type="match status" value="1"/>
</dbReference>
<dbReference type="PRINTS" id="PR00064">
    <property type="entry name" value="RIBOSOMALL35"/>
</dbReference>
<dbReference type="SUPFAM" id="SSF143034">
    <property type="entry name" value="L35p-like"/>
    <property type="match status" value="1"/>
</dbReference>
<dbReference type="PROSITE" id="PS00936">
    <property type="entry name" value="RIBOSOMAL_L35"/>
    <property type="match status" value="1"/>
</dbReference>
<proteinExistence type="inferred from homology"/>
<feature type="chain" id="PRO_1000211701" description="Large ribosomal subunit protein bL35">
    <location>
        <begin position="1"/>
        <end position="65"/>
    </location>
</feature>
<gene>
    <name evidence="1" type="primary">rpmI</name>
    <name type="ordered locus">NT01EI_1888</name>
</gene>
<reference key="1">
    <citation type="submission" date="2009-03" db="EMBL/GenBank/DDBJ databases">
        <title>Complete genome sequence of Edwardsiella ictaluri 93-146.</title>
        <authorList>
            <person name="Williams M.L."/>
            <person name="Gillaspy A.F."/>
            <person name="Dyer D.W."/>
            <person name="Thune R.L."/>
            <person name="Waldbieser G.C."/>
            <person name="Schuster S.C."/>
            <person name="Gipson J."/>
            <person name="Zaitshik J."/>
            <person name="Landry C."/>
            <person name="Lawrence M.L."/>
        </authorList>
    </citation>
    <scope>NUCLEOTIDE SEQUENCE [LARGE SCALE GENOMIC DNA]</scope>
    <source>
        <strain>93-146</strain>
    </source>
</reference>
<organism>
    <name type="scientific">Edwardsiella ictaluri (strain 93-146)</name>
    <dbReference type="NCBI Taxonomy" id="634503"/>
    <lineage>
        <taxon>Bacteria</taxon>
        <taxon>Pseudomonadati</taxon>
        <taxon>Pseudomonadota</taxon>
        <taxon>Gammaproteobacteria</taxon>
        <taxon>Enterobacterales</taxon>
        <taxon>Hafniaceae</taxon>
        <taxon>Edwardsiella</taxon>
    </lineage>
</organism>
<sequence>MPKIKTVRGAAKRFKKTAGGGFKRKHANLRHILTKKSTKRKRHLRPKSQVSKGDLGLVVACLPYA</sequence>
<keyword id="KW-0687">Ribonucleoprotein</keyword>
<keyword id="KW-0689">Ribosomal protein</keyword>
<accession>C5B848</accession>
<protein>
    <recommendedName>
        <fullName evidence="1">Large ribosomal subunit protein bL35</fullName>
    </recommendedName>
    <alternativeName>
        <fullName evidence="2">50S ribosomal protein L35</fullName>
    </alternativeName>
</protein>
<comment type="similarity">
    <text evidence="1">Belongs to the bacterial ribosomal protein bL35 family.</text>
</comment>
<evidence type="ECO:0000255" key="1">
    <source>
        <dbReference type="HAMAP-Rule" id="MF_00514"/>
    </source>
</evidence>
<evidence type="ECO:0000305" key="2"/>
<name>RL35_EDWI9</name>